<accession>A5CRW2</accession>
<gene>
    <name evidence="1" type="primary">hisF</name>
    <name type="ordered locus">CMM_1769</name>
</gene>
<organism>
    <name type="scientific">Clavibacter michiganensis subsp. michiganensis (strain NCPPB 382)</name>
    <dbReference type="NCBI Taxonomy" id="443906"/>
    <lineage>
        <taxon>Bacteria</taxon>
        <taxon>Bacillati</taxon>
        <taxon>Actinomycetota</taxon>
        <taxon>Actinomycetes</taxon>
        <taxon>Micrococcales</taxon>
        <taxon>Microbacteriaceae</taxon>
        <taxon>Clavibacter</taxon>
    </lineage>
</organism>
<reference key="1">
    <citation type="journal article" date="2008" name="J. Bacteriol.">
        <title>The genome sequence of the tomato-pathogenic actinomycete Clavibacter michiganensis subsp. michiganensis NCPPB382 reveals a large island involved in pathogenicity.</title>
        <authorList>
            <person name="Gartemann K.-H."/>
            <person name="Abt B."/>
            <person name="Bekel T."/>
            <person name="Burger A."/>
            <person name="Engemann J."/>
            <person name="Fluegel M."/>
            <person name="Gaigalat L."/>
            <person name="Goesmann A."/>
            <person name="Graefen I."/>
            <person name="Kalinowski J."/>
            <person name="Kaup O."/>
            <person name="Kirchner O."/>
            <person name="Krause L."/>
            <person name="Linke B."/>
            <person name="McHardy A."/>
            <person name="Meyer F."/>
            <person name="Pohle S."/>
            <person name="Rueckert C."/>
            <person name="Schneiker S."/>
            <person name="Zellermann E.-M."/>
            <person name="Puehler A."/>
            <person name="Eichenlaub R."/>
            <person name="Kaiser O."/>
            <person name="Bartels D."/>
        </authorList>
    </citation>
    <scope>NUCLEOTIDE SEQUENCE [LARGE SCALE GENOMIC DNA]</scope>
    <source>
        <strain>NCPPB 382</strain>
    </source>
</reference>
<sequence>MAASAASGPSAQLAVRVIPCLDVAAGRVVKGVNFLDLQDAGDPVELARLYYEQGADELTFLDVTATVEDRSTMYDVVSATAEQVFIPLTVGGGVRSADDVARLLASGADKIGVNSAAIARPDLVGEIADRFGAQVCVLSLDITRGDTESGFVVTTHGGRTRTTIDAVAWAREAVERGAGELLVNSIDADGTRDGFDLELVAAMRAASRVPVIASGGAGELDHFAPAIEAGADAVLAASVFHSRRFTIGDVKGALADAGQVVRR</sequence>
<dbReference type="EC" id="4.3.2.10" evidence="1"/>
<dbReference type="EMBL" id="AM711867">
    <property type="protein sequence ID" value="CAN01825.1"/>
    <property type="molecule type" value="Genomic_DNA"/>
</dbReference>
<dbReference type="RefSeq" id="WP_012038457.1">
    <property type="nucleotide sequence ID" value="NC_009480.1"/>
</dbReference>
<dbReference type="SMR" id="A5CRW2"/>
<dbReference type="KEGG" id="cmi:CMM_1769"/>
<dbReference type="eggNOG" id="COG0107">
    <property type="taxonomic scope" value="Bacteria"/>
</dbReference>
<dbReference type="HOGENOM" id="CLU_048577_4_0_11"/>
<dbReference type="OrthoDB" id="9781903at2"/>
<dbReference type="UniPathway" id="UPA00031">
    <property type="reaction ID" value="UER00010"/>
</dbReference>
<dbReference type="Proteomes" id="UP000001564">
    <property type="component" value="Chromosome"/>
</dbReference>
<dbReference type="GO" id="GO:0005737">
    <property type="term" value="C:cytoplasm"/>
    <property type="evidence" value="ECO:0007669"/>
    <property type="project" value="UniProtKB-SubCell"/>
</dbReference>
<dbReference type="GO" id="GO:0000107">
    <property type="term" value="F:imidazoleglycerol-phosphate synthase activity"/>
    <property type="evidence" value="ECO:0007669"/>
    <property type="project" value="UniProtKB-UniRule"/>
</dbReference>
<dbReference type="GO" id="GO:0016829">
    <property type="term" value="F:lyase activity"/>
    <property type="evidence" value="ECO:0007669"/>
    <property type="project" value="UniProtKB-KW"/>
</dbReference>
<dbReference type="GO" id="GO:0000105">
    <property type="term" value="P:L-histidine biosynthetic process"/>
    <property type="evidence" value="ECO:0007669"/>
    <property type="project" value="UniProtKB-UniRule"/>
</dbReference>
<dbReference type="CDD" id="cd04731">
    <property type="entry name" value="HisF"/>
    <property type="match status" value="1"/>
</dbReference>
<dbReference type="Gene3D" id="3.20.20.70">
    <property type="entry name" value="Aldolase class I"/>
    <property type="match status" value="1"/>
</dbReference>
<dbReference type="HAMAP" id="MF_01013">
    <property type="entry name" value="HisF"/>
    <property type="match status" value="1"/>
</dbReference>
<dbReference type="InterPro" id="IPR013785">
    <property type="entry name" value="Aldolase_TIM"/>
</dbReference>
<dbReference type="InterPro" id="IPR006062">
    <property type="entry name" value="His_biosynth"/>
</dbReference>
<dbReference type="InterPro" id="IPR004651">
    <property type="entry name" value="HisF"/>
</dbReference>
<dbReference type="InterPro" id="IPR050064">
    <property type="entry name" value="IGPS_HisA/HisF"/>
</dbReference>
<dbReference type="InterPro" id="IPR011060">
    <property type="entry name" value="RibuloseP-bd_barrel"/>
</dbReference>
<dbReference type="NCBIfam" id="TIGR00735">
    <property type="entry name" value="hisF"/>
    <property type="match status" value="1"/>
</dbReference>
<dbReference type="PANTHER" id="PTHR21235:SF2">
    <property type="entry name" value="IMIDAZOLE GLYCEROL PHOSPHATE SYNTHASE HISHF"/>
    <property type="match status" value="1"/>
</dbReference>
<dbReference type="PANTHER" id="PTHR21235">
    <property type="entry name" value="IMIDAZOLE GLYCEROL PHOSPHATE SYNTHASE SUBUNIT HISF/H IGP SYNTHASE SUBUNIT HISF/H"/>
    <property type="match status" value="1"/>
</dbReference>
<dbReference type="Pfam" id="PF00977">
    <property type="entry name" value="His_biosynth"/>
    <property type="match status" value="1"/>
</dbReference>
<dbReference type="SUPFAM" id="SSF51366">
    <property type="entry name" value="Ribulose-phoshate binding barrel"/>
    <property type="match status" value="1"/>
</dbReference>
<keyword id="KW-0028">Amino-acid biosynthesis</keyword>
<keyword id="KW-0963">Cytoplasm</keyword>
<keyword id="KW-0368">Histidine biosynthesis</keyword>
<keyword id="KW-0456">Lyase</keyword>
<protein>
    <recommendedName>
        <fullName evidence="1">Imidazole glycerol phosphate synthase subunit HisF</fullName>
        <ecNumber evidence="1">4.3.2.10</ecNumber>
    </recommendedName>
    <alternativeName>
        <fullName evidence="1">IGP synthase cyclase subunit</fullName>
    </alternativeName>
    <alternativeName>
        <fullName evidence="1">IGP synthase subunit HisF</fullName>
    </alternativeName>
    <alternativeName>
        <fullName evidence="1">ImGP synthase subunit HisF</fullName>
        <shortName evidence="1">IGPS subunit HisF</shortName>
    </alternativeName>
</protein>
<comment type="function">
    <text evidence="1">IGPS catalyzes the conversion of PRFAR and glutamine to IGP, AICAR and glutamate. The HisF subunit catalyzes the cyclization activity that produces IGP and AICAR from PRFAR using the ammonia provided by the HisH subunit.</text>
</comment>
<comment type="catalytic activity">
    <reaction evidence="1">
        <text>5-[(5-phospho-1-deoxy-D-ribulos-1-ylimino)methylamino]-1-(5-phospho-beta-D-ribosyl)imidazole-4-carboxamide + L-glutamine = D-erythro-1-(imidazol-4-yl)glycerol 3-phosphate + 5-amino-1-(5-phospho-beta-D-ribosyl)imidazole-4-carboxamide + L-glutamate + H(+)</text>
        <dbReference type="Rhea" id="RHEA:24793"/>
        <dbReference type="ChEBI" id="CHEBI:15378"/>
        <dbReference type="ChEBI" id="CHEBI:29985"/>
        <dbReference type="ChEBI" id="CHEBI:58278"/>
        <dbReference type="ChEBI" id="CHEBI:58359"/>
        <dbReference type="ChEBI" id="CHEBI:58475"/>
        <dbReference type="ChEBI" id="CHEBI:58525"/>
        <dbReference type="EC" id="4.3.2.10"/>
    </reaction>
</comment>
<comment type="pathway">
    <text evidence="1">Amino-acid biosynthesis; L-histidine biosynthesis; L-histidine from 5-phospho-alpha-D-ribose 1-diphosphate: step 5/9.</text>
</comment>
<comment type="subunit">
    <text evidence="1">Heterodimer of HisH and HisF.</text>
</comment>
<comment type="subcellular location">
    <subcellularLocation>
        <location evidence="1">Cytoplasm</location>
    </subcellularLocation>
</comment>
<comment type="similarity">
    <text evidence="1">Belongs to the HisA/HisF family.</text>
</comment>
<name>HIS6_CLAM3</name>
<evidence type="ECO:0000255" key="1">
    <source>
        <dbReference type="HAMAP-Rule" id="MF_01013"/>
    </source>
</evidence>
<proteinExistence type="inferred from homology"/>
<feature type="chain" id="PRO_0000319455" description="Imidazole glycerol phosphate synthase subunit HisF">
    <location>
        <begin position="1"/>
        <end position="263"/>
    </location>
</feature>
<feature type="active site" evidence="1">
    <location>
        <position position="22"/>
    </location>
</feature>
<feature type="active site" evidence="1">
    <location>
        <position position="141"/>
    </location>
</feature>